<comment type="function">
    <text evidence="2">With S4 and S5 plays an important role in translational accuracy.</text>
</comment>
<comment type="function">
    <text evidence="2">Interacts with and stabilizes bases of the 16S rRNA that are involved in tRNA selection in the A site and with the mRNA backbone. Located at the interface of the 30S and 50S subunits, it traverses the body of the 30S subunit contacting proteins on the other side and probably holding the rRNA structure together. The combined cluster of proteins S8, S12 and S17 appears to hold together the shoulder and platform of the 30S subunit.</text>
</comment>
<comment type="subunit">
    <text evidence="2">Part of the 30S ribosomal subunit. Contacts proteins S8 and S17. May interact with IF1 in the 30S initiation complex.</text>
</comment>
<comment type="similarity">
    <text evidence="2">Belongs to the universal ribosomal protein uS12 family.</text>
</comment>
<comment type="sequence caution" evidence="4">
    <conflict type="erroneous initiation">
        <sequence resource="EMBL-CDS" id="CAJ59741"/>
    </conflict>
</comment>
<accession>Q0RRS6</accession>
<organism>
    <name type="scientific">Frankia alni (strain DSM 45986 / CECT 9034 / ACN14a)</name>
    <dbReference type="NCBI Taxonomy" id="326424"/>
    <lineage>
        <taxon>Bacteria</taxon>
        <taxon>Bacillati</taxon>
        <taxon>Actinomycetota</taxon>
        <taxon>Actinomycetes</taxon>
        <taxon>Frankiales</taxon>
        <taxon>Frankiaceae</taxon>
        <taxon>Frankia</taxon>
    </lineage>
</organism>
<proteinExistence type="inferred from homology"/>
<protein>
    <recommendedName>
        <fullName evidence="2">Small ribosomal subunit protein uS12</fullName>
    </recommendedName>
    <alternativeName>
        <fullName evidence="4">30S ribosomal protein S12</fullName>
    </alternativeName>
</protein>
<dbReference type="EMBL" id="CT573213">
    <property type="protein sequence ID" value="CAJ59741.1"/>
    <property type="status" value="ALT_INIT"/>
    <property type="molecule type" value="Genomic_DNA"/>
</dbReference>
<dbReference type="RefSeq" id="WP_009740532.1">
    <property type="nucleotide sequence ID" value="NC_008278.1"/>
</dbReference>
<dbReference type="SMR" id="Q0RRS6"/>
<dbReference type="STRING" id="326424.FRAAL1076"/>
<dbReference type="KEGG" id="fal:FRAAL1076"/>
<dbReference type="eggNOG" id="COG0048">
    <property type="taxonomic scope" value="Bacteria"/>
</dbReference>
<dbReference type="HOGENOM" id="CLU_104295_1_2_11"/>
<dbReference type="OrthoDB" id="9802366at2"/>
<dbReference type="Proteomes" id="UP000000657">
    <property type="component" value="Chromosome"/>
</dbReference>
<dbReference type="GO" id="GO:0015935">
    <property type="term" value="C:small ribosomal subunit"/>
    <property type="evidence" value="ECO:0007669"/>
    <property type="project" value="InterPro"/>
</dbReference>
<dbReference type="GO" id="GO:0019843">
    <property type="term" value="F:rRNA binding"/>
    <property type="evidence" value="ECO:0007669"/>
    <property type="project" value="UniProtKB-UniRule"/>
</dbReference>
<dbReference type="GO" id="GO:0003735">
    <property type="term" value="F:structural constituent of ribosome"/>
    <property type="evidence" value="ECO:0007669"/>
    <property type="project" value="InterPro"/>
</dbReference>
<dbReference type="GO" id="GO:0000049">
    <property type="term" value="F:tRNA binding"/>
    <property type="evidence" value="ECO:0007669"/>
    <property type="project" value="UniProtKB-UniRule"/>
</dbReference>
<dbReference type="GO" id="GO:0006412">
    <property type="term" value="P:translation"/>
    <property type="evidence" value="ECO:0007669"/>
    <property type="project" value="UniProtKB-UniRule"/>
</dbReference>
<dbReference type="CDD" id="cd03368">
    <property type="entry name" value="Ribosomal_S12"/>
    <property type="match status" value="1"/>
</dbReference>
<dbReference type="FunFam" id="2.40.50.140:FF:000001">
    <property type="entry name" value="30S ribosomal protein S12"/>
    <property type="match status" value="1"/>
</dbReference>
<dbReference type="Gene3D" id="2.40.50.140">
    <property type="entry name" value="Nucleic acid-binding proteins"/>
    <property type="match status" value="1"/>
</dbReference>
<dbReference type="HAMAP" id="MF_00403_B">
    <property type="entry name" value="Ribosomal_uS12_B"/>
    <property type="match status" value="1"/>
</dbReference>
<dbReference type="InterPro" id="IPR012340">
    <property type="entry name" value="NA-bd_OB-fold"/>
</dbReference>
<dbReference type="InterPro" id="IPR006032">
    <property type="entry name" value="Ribosomal_uS12"/>
</dbReference>
<dbReference type="InterPro" id="IPR005679">
    <property type="entry name" value="Ribosomal_uS12_bac"/>
</dbReference>
<dbReference type="NCBIfam" id="TIGR00981">
    <property type="entry name" value="rpsL_bact"/>
    <property type="match status" value="1"/>
</dbReference>
<dbReference type="PANTHER" id="PTHR11652">
    <property type="entry name" value="30S RIBOSOMAL PROTEIN S12 FAMILY MEMBER"/>
    <property type="match status" value="1"/>
</dbReference>
<dbReference type="Pfam" id="PF00164">
    <property type="entry name" value="Ribosom_S12_S23"/>
    <property type="match status" value="1"/>
</dbReference>
<dbReference type="PIRSF" id="PIRSF002133">
    <property type="entry name" value="Ribosomal_S12/S23"/>
    <property type="match status" value="1"/>
</dbReference>
<dbReference type="PRINTS" id="PR01034">
    <property type="entry name" value="RIBOSOMALS12"/>
</dbReference>
<dbReference type="SUPFAM" id="SSF50249">
    <property type="entry name" value="Nucleic acid-binding proteins"/>
    <property type="match status" value="1"/>
</dbReference>
<dbReference type="PROSITE" id="PS00055">
    <property type="entry name" value="RIBOSOMAL_S12"/>
    <property type="match status" value="1"/>
</dbReference>
<keyword id="KW-0488">Methylation</keyword>
<keyword id="KW-1185">Reference proteome</keyword>
<keyword id="KW-0687">Ribonucleoprotein</keyword>
<keyword id="KW-0689">Ribosomal protein</keyword>
<keyword id="KW-0694">RNA-binding</keyword>
<keyword id="KW-0699">rRNA-binding</keyword>
<keyword id="KW-0820">tRNA-binding</keyword>
<sequence length="124" mass="13811">MPTIQQLVRKGRQDKVEKTKTPALKGSPQRRGVCTRVYTTTPKKPNSALRKVARVRLNSGIEVTAYIPGVGHNLQEHSIVLVRGGRVKDLPGVRYKIVRGALDTQGVRNRKQARSRYGAKKEKG</sequence>
<evidence type="ECO:0000250" key="1"/>
<evidence type="ECO:0000255" key="2">
    <source>
        <dbReference type="HAMAP-Rule" id="MF_00403"/>
    </source>
</evidence>
<evidence type="ECO:0000256" key="3">
    <source>
        <dbReference type="SAM" id="MobiDB-lite"/>
    </source>
</evidence>
<evidence type="ECO:0000305" key="4"/>
<feature type="chain" id="PRO_0000295980" description="Small ribosomal subunit protein uS12">
    <location>
        <begin position="1"/>
        <end position="124"/>
    </location>
</feature>
<feature type="region of interest" description="Disordered" evidence="3">
    <location>
        <begin position="1"/>
        <end position="32"/>
    </location>
</feature>
<feature type="compositionally biased region" description="Basic and acidic residues" evidence="3">
    <location>
        <begin position="11"/>
        <end position="20"/>
    </location>
</feature>
<feature type="modified residue" description="3-methylthioaspartic acid" evidence="1">
    <location>
        <position position="89"/>
    </location>
</feature>
<gene>
    <name evidence="2" type="primary">rpsL</name>
    <name type="ordered locus">FRAAL1076</name>
</gene>
<name>RS12_FRAAA</name>
<reference key="1">
    <citation type="journal article" date="2007" name="Genome Res.">
        <title>Genome characteristics of facultatively symbiotic Frankia sp. strains reflect host range and host plant biogeography.</title>
        <authorList>
            <person name="Normand P."/>
            <person name="Lapierre P."/>
            <person name="Tisa L.S."/>
            <person name="Gogarten J.P."/>
            <person name="Alloisio N."/>
            <person name="Bagnarol E."/>
            <person name="Bassi C.A."/>
            <person name="Berry A.M."/>
            <person name="Bickhart D.M."/>
            <person name="Choisne N."/>
            <person name="Couloux A."/>
            <person name="Cournoyer B."/>
            <person name="Cruveiller S."/>
            <person name="Daubin V."/>
            <person name="Demange N."/>
            <person name="Francino M.P."/>
            <person name="Goltsman E."/>
            <person name="Huang Y."/>
            <person name="Kopp O.R."/>
            <person name="Labarre L."/>
            <person name="Lapidus A."/>
            <person name="Lavire C."/>
            <person name="Marechal J."/>
            <person name="Martinez M."/>
            <person name="Mastronunzio J.E."/>
            <person name="Mullin B.C."/>
            <person name="Niemann J."/>
            <person name="Pujic P."/>
            <person name="Rawnsley T."/>
            <person name="Rouy Z."/>
            <person name="Schenowitz C."/>
            <person name="Sellstedt A."/>
            <person name="Tavares F."/>
            <person name="Tomkins J.P."/>
            <person name="Vallenet D."/>
            <person name="Valverde C."/>
            <person name="Wall L.G."/>
            <person name="Wang Y."/>
            <person name="Medigue C."/>
            <person name="Benson D.R."/>
        </authorList>
    </citation>
    <scope>NUCLEOTIDE SEQUENCE [LARGE SCALE GENOMIC DNA]</scope>
    <source>
        <strain>DSM 45986 / CECT 9034 / ACN14a</strain>
    </source>
</reference>